<proteinExistence type="inferred from homology"/>
<reference key="1">
    <citation type="journal article" date="2008" name="J. Bacteriol.">
        <title>The complete genome sequence of Escherichia coli DH10B: insights into the biology of a laboratory workhorse.</title>
        <authorList>
            <person name="Durfee T."/>
            <person name="Nelson R."/>
            <person name="Baldwin S."/>
            <person name="Plunkett G. III"/>
            <person name="Burland V."/>
            <person name="Mau B."/>
            <person name="Petrosino J.F."/>
            <person name="Qin X."/>
            <person name="Muzny D.M."/>
            <person name="Ayele M."/>
            <person name="Gibbs R.A."/>
            <person name="Csorgo B."/>
            <person name="Posfai G."/>
            <person name="Weinstock G.M."/>
            <person name="Blattner F.R."/>
        </authorList>
    </citation>
    <scope>NUCLEOTIDE SEQUENCE [LARGE SCALE GENOMIC DNA]</scope>
    <source>
        <strain>K12 / DH10B</strain>
    </source>
</reference>
<evidence type="ECO:0000255" key="1">
    <source>
        <dbReference type="HAMAP-Rule" id="MF_00581"/>
    </source>
</evidence>
<dbReference type="EC" id="6.3.4.5" evidence="1"/>
<dbReference type="EMBL" id="CP000948">
    <property type="protein sequence ID" value="ACB04250.1"/>
    <property type="molecule type" value="Genomic_DNA"/>
</dbReference>
<dbReference type="RefSeq" id="WP_000207680.1">
    <property type="nucleotide sequence ID" value="NC_010473.1"/>
</dbReference>
<dbReference type="SMR" id="B1XGY3"/>
<dbReference type="KEGG" id="ecd:ECDH10B_3346"/>
<dbReference type="HOGENOM" id="CLU_032784_4_1_6"/>
<dbReference type="UniPathway" id="UPA00068">
    <property type="reaction ID" value="UER00113"/>
</dbReference>
<dbReference type="GO" id="GO:0005737">
    <property type="term" value="C:cytoplasm"/>
    <property type="evidence" value="ECO:0007669"/>
    <property type="project" value="UniProtKB-SubCell"/>
</dbReference>
<dbReference type="GO" id="GO:0004055">
    <property type="term" value="F:argininosuccinate synthase activity"/>
    <property type="evidence" value="ECO:0007669"/>
    <property type="project" value="UniProtKB-UniRule"/>
</dbReference>
<dbReference type="GO" id="GO:0005524">
    <property type="term" value="F:ATP binding"/>
    <property type="evidence" value="ECO:0007669"/>
    <property type="project" value="UniProtKB-UniRule"/>
</dbReference>
<dbReference type="GO" id="GO:0042803">
    <property type="term" value="F:protein homodimerization activity"/>
    <property type="evidence" value="ECO:0007669"/>
    <property type="project" value="InterPro"/>
</dbReference>
<dbReference type="GO" id="GO:0000053">
    <property type="term" value="P:argininosuccinate metabolic process"/>
    <property type="evidence" value="ECO:0007669"/>
    <property type="project" value="TreeGrafter"/>
</dbReference>
<dbReference type="GO" id="GO:0006526">
    <property type="term" value="P:L-arginine biosynthetic process"/>
    <property type="evidence" value="ECO:0007669"/>
    <property type="project" value="UniProtKB-UniRule"/>
</dbReference>
<dbReference type="GO" id="GO:0000050">
    <property type="term" value="P:urea cycle"/>
    <property type="evidence" value="ECO:0007669"/>
    <property type="project" value="TreeGrafter"/>
</dbReference>
<dbReference type="CDD" id="cd01999">
    <property type="entry name" value="ASS"/>
    <property type="match status" value="1"/>
</dbReference>
<dbReference type="FunFam" id="1.10.287.400:FF:000001">
    <property type="entry name" value="Argininosuccinate synthase"/>
    <property type="match status" value="1"/>
</dbReference>
<dbReference type="Gene3D" id="1.10.287.400">
    <property type="match status" value="1"/>
</dbReference>
<dbReference type="Gene3D" id="3.90.1260.10">
    <property type="entry name" value="Argininosuccinate synthetase, chain A, domain 2"/>
    <property type="match status" value="1"/>
</dbReference>
<dbReference type="Gene3D" id="3.40.50.620">
    <property type="entry name" value="HUPs"/>
    <property type="match status" value="1"/>
</dbReference>
<dbReference type="HAMAP" id="MF_00581">
    <property type="entry name" value="Arg_succ_synth_type2"/>
    <property type="match status" value="1"/>
</dbReference>
<dbReference type="InterPro" id="IPR023437">
    <property type="entry name" value="Arg_succ_synth_type2_subfam"/>
</dbReference>
<dbReference type="InterPro" id="IPR048268">
    <property type="entry name" value="Arginosuc_syn_C"/>
</dbReference>
<dbReference type="InterPro" id="IPR048267">
    <property type="entry name" value="Arginosuc_syn_N"/>
</dbReference>
<dbReference type="InterPro" id="IPR001518">
    <property type="entry name" value="Arginosuc_synth"/>
</dbReference>
<dbReference type="InterPro" id="IPR018223">
    <property type="entry name" value="Arginosuc_synth_CS"/>
</dbReference>
<dbReference type="InterPro" id="IPR023434">
    <property type="entry name" value="Arginosuc_synth_type_1_subfam"/>
</dbReference>
<dbReference type="InterPro" id="IPR024074">
    <property type="entry name" value="AS_cat/multimer_dom_body"/>
</dbReference>
<dbReference type="InterPro" id="IPR024073">
    <property type="entry name" value="AS_multimer_C_tail"/>
</dbReference>
<dbReference type="InterPro" id="IPR014729">
    <property type="entry name" value="Rossmann-like_a/b/a_fold"/>
</dbReference>
<dbReference type="NCBIfam" id="TIGR00032">
    <property type="entry name" value="argG"/>
    <property type="match status" value="1"/>
</dbReference>
<dbReference type="NCBIfam" id="NF003779">
    <property type="entry name" value="PRK05370.1"/>
    <property type="match status" value="1"/>
</dbReference>
<dbReference type="PANTHER" id="PTHR11587">
    <property type="entry name" value="ARGININOSUCCINATE SYNTHASE"/>
    <property type="match status" value="1"/>
</dbReference>
<dbReference type="PANTHER" id="PTHR11587:SF2">
    <property type="entry name" value="ARGININOSUCCINATE SYNTHASE"/>
    <property type="match status" value="1"/>
</dbReference>
<dbReference type="Pfam" id="PF20979">
    <property type="entry name" value="Arginosuc_syn_C"/>
    <property type="match status" value="1"/>
</dbReference>
<dbReference type="Pfam" id="PF00764">
    <property type="entry name" value="Arginosuc_synth"/>
    <property type="match status" value="1"/>
</dbReference>
<dbReference type="SUPFAM" id="SSF52402">
    <property type="entry name" value="Adenine nucleotide alpha hydrolases-like"/>
    <property type="match status" value="1"/>
</dbReference>
<dbReference type="SUPFAM" id="SSF69864">
    <property type="entry name" value="Argininosuccinate synthetase, C-terminal domain"/>
    <property type="match status" value="1"/>
</dbReference>
<dbReference type="PROSITE" id="PS00564">
    <property type="entry name" value="ARGININOSUCCIN_SYN_1"/>
    <property type="match status" value="1"/>
</dbReference>
<dbReference type="PROSITE" id="PS00565">
    <property type="entry name" value="ARGININOSUCCIN_SYN_2"/>
    <property type="match status" value="1"/>
</dbReference>
<protein>
    <recommendedName>
        <fullName evidence="1">Argininosuccinate synthase</fullName>
        <ecNumber evidence="1">6.3.4.5</ecNumber>
    </recommendedName>
    <alternativeName>
        <fullName evidence="1">Citrulline--aspartate ligase</fullName>
    </alternativeName>
</protein>
<sequence length="447" mass="49898">MTTILKHLPVGQRIGIAFSGGLDTSAALLWMRQKGAVPYAYTANLGQPDEEDYDAIPRRAMEYGAENARLIDCRKQLVAEGIAAIQCGAFHNTTGGLTYFNTTPLGRAVTGTMLVAAMKEDGVNIWGDGSTYKGNDIERFYRYGLLTNAELQIYKPWLDTDFIDELGGRHEMSEFMIACGFDYKMSVEKAYSTDSNMLGATHEAKDLEYLNSSVKIVNPIMGVKFWDESVKIPAEEVTVRFEQGHPVALNGKTFSDDVEMMLEANRIGGRHGLGMSDQIENRIIEAKSRGIYEAPGMALLHIAYERLLTGIHNEDTIEQYHAHGRQLGRLLYQGRWFDSQALMLRDSLQRWVASQITGEVTLELRRGNDYSILNTVSENLTYKPERLTMEKGDSVFSPDDRIGQLTMRNLDITDTREKLFGYAKTGLLSSSAASGVPQVENLENKGQ</sequence>
<accession>B1XGY3</accession>
<organism>
    <name type="scientific">Escherichia coli (strain K12 / DH10B)</name>
    <dbReference type="NCBI Taxonomy" id="316385"/>
    <lineage>
        <taxon>Bacteria</taxon>
        <taxon>Pseudomonadati</taxon>
        <taxon>Pseudomonadota</taxon>
        <taxon>Gammaproteobacteria</taxon>
        <taxon>Enterobacterales</taxon>
        <taxon>Enterobacteriaceae</taxon>
        <taxon>Escherichia</taxon>
    </lineage>
</organism>
<comment type="catalytic activity">
    <reaction evidence="1">
        <text>L-citrulline + L-aspartate + ATP = 2-(N(omega)-L-arginino)succinate + AMP + diphosphate + H(+)</text>
        <dbReference type="Rhea" id="RHEA:10932"/>
        <dbReference type="ChEBI" id="CHEBI:15378"/>
        <dbReference type="ChEBI" id="CHEBI:29991"/>
        <dbReference type="ChEBI" id="CHEBI:30616"/>
        <dbReference type="ChEBI" id="CHEBI:33019"/>
        <dbReference type="ChEBI" id="CHEBI:57472"/>
        <dbReference type="ChEBI" id="CHEBI:57743"/>
        <dbReference type="ChEBI" id="CHEBI:456215"/>
        <dbReference type="EC" id="6.3.4.5"/>
    </reaction>
</comment>
<comment type="pathway">
    <text evidence="1">Amino-acid biosynthesis; L-arginine biosynthesis; L-arginine from L-ornithine and carbamoyl phosphate: step 2/3.</text>
</comment>
<comment type="subunit">
    <text evidence="1">Homotetramer.</text>
</comment>
<comment type="subcellular location">
    <subcellularLocation>
        <location evidence="1">Cytoplasm</location>
    </subcellularLocation>
</comment>
<comment type="similarity">
    <text evidence="1">Belongs to the argininosuccinate synthase family. Type 2 subfamily.</text>
</comment>
<feature type="chain" id="PRO_1000129749" description="Argininosuccinate synthase">
    <location>
        <begin position="1"/>
        <end position="447"/>
    </location>
</feature>
<feature type="binding site" evidence="1">
    <location>
        <begin position="17"/>
        <end position="25"/>
    </location>
    <ligand>
        <name>ATP</name>
        <dbReference type="ChEBI" id="CHEBI:30616"/>
    </ligand>
</feature>
<feature type="binding site" evidence="1">
    <location>
        <position position="43"/>
    </location>
    <ligand>
        <name>ATP</name>
        <dbReference type="ChEBI" id="CHEBI:30616"/>
    </ligand>
</feature>
<feature type="binding site" evidence="1">
    <location>
        <position position="99"/>
    </location>
    <ligand>
        <name>L-citrulline</name>
        <dbReference type="ChEBI" id="CHEBI:57743"/>
    </ligand>
</feature>
<feature type="binding site" evidence="1">
    <location>
        <position position="129"/>
    </location>
    <ligand>
        <name>ATP</name>
        <dbReference type="ChEBI" id="CHEBI:30616"/>
    </ligand>
</feature>
<feature type="binding site" evidence="1">
    <location>
        <position position="131"/>
    </location>
    <ligand>
        <name>ATP</name>
        <dbReference type="ChEBI" id="CHEBI:30616"/>
    </ligand>
</feature>
<feature type="binding site" evidence="1">
    <location>
        <position position="131"/>
    </location>
    <ligand>
        <name>L-aspartate</name>
        <dbReference type="ChEBI" id="CHEBI:29991"/>
    </ligand>
</feature>
<feature type="binding site" evidence="1">
    <location>
        <position position="135"/>
    </location>
    <ligand>
        <name>L-aspartate</name>
        <dbReference type="ChEBI" id="CHEBI:29991"/>
    </ligand>
</feature>
<feature type="binding site" evidence="1">
    <location>
        <position position="135"/>
    </location>
    <ligand>
        <name>L-citrulline</name>
        <dbReference type="ChEBI" id="CHEBI:57743"/>
    </ligand>
</feature>
<feature type="binding site" evidence="1">
    <location>
        <position position="136"/>
    </location>
    <ligand>
        <name>ATP</name>
        <dbReference type="ChEBI" id="CHEBI:30616"/>
    </ligand>
</feature>
<feature type="binding site" evidence="1">
    <location>
        <position position="136"/>
    </location>
    <ligand>
        <name>L-aspartate</name>
        <dbReference type="ChEBI" id="CHEBI:29991"/>
    </ligand>
</feature>
<feature type="binding site" evidence="1">
    <location>
        <position position="139"/>
    </location>
    <ligand>
        <name>L-citrulline</name>
        <dbReference type="ChEBI" id="CHEBI:57743"/>
    </ligand>
</feature>
<feature type="binding site" evidence="1">
    <location>
        <position position="192"/>
    </location>
    <ligand>
        <name>L-citrulline</name>
        <dbReference type="ChEBI" id="CHEBI:57743"/>
    </ligand>
</feature>
<feature type="binding site" evidence="1">
    <location>
        <position position="194"/>
    </location>
    <ligand>
        <name>ATP</name>
        <dbReference type="ChEBI" id="CHEBI:30616"/>
    </ligand>
</feature>
<feature type="binding site" evidence="1">
    <location>
        <position position="201"/>
    </location>
    <ligand>
        <name>L-citrulline</name>
        <dbReference type="ChEBI" id="CHEBI:57743"/>
    </ligand>
</feature>
<feature type="binding site" evidence="1">
    <location>
        <position position="203"/>
    </location>
    <ligand>
        <name>L-citrulline</name>
        <dbReference type="ChEBI" id="CHEBI:57743"/>
    </ligand>
</feature>
<feature type="binding site" evidence="1">
    <location>
        <position position="280"/>
    </location>
    <ligand>
        <name>L-citrulline</name>
        <dbReference type="ChEBI" id="CHEBI:57743"/>
    </ligand>
</feature>
<gene>
    <name evidence="1" type="primary">argG</name>
    <name type="ordered locus">ECDH10B_3346</name>
</gene>
<keyword id="KW-0028">Amino-acid biosynthesis</keyword>
<keyword id="KW-0055">Arginine biosynthesis</keyword>
<keyword id="KW-0067">ATP-binding</keyword>
<keyword id="KW-0963">Cytoplasm</keyword>
<keyword id="KW-0436">Ligase</keyword>
<keyword id="KW-0547">Nucleotide-binding</keyword>
<name>ASSY_ECODH</name>